<name>RL2_NITMS</name>
<sequence>MGKRPLVRRRGRGGNQFRSTSTGKVGTKANYPRFPLSEQHEGEIIDLVHERGREAPLAKVRFEDGSVSFVPAVLGAKVGETLQFGLKSKIEKGNVISIQNIPDGTIVCNIEKHFGDGGAIVKSAGTDATVFSHGDEGVTVKLPSGKFTTLNPKNRAMIGTLAGGGASERPFMSAGGKWRNFKAKGKKYPIVRGVAQAAYVHPHGGGRHQHVGQSSTVSRDTPPGAKVGSIAARKTGRARIKERK</sequence>
<comment type="function">
    <text evidence="1">One of the primary rRNA binding proteins. Required for association of the 30S and 50S subunits to form the 70S ribosome, for tRNA binding and peptide bond formation. It has been suggested to have peptidyltransferase activity; this is somewhat controversial. Makes several contacts with the 16S rRNA in the 70S ribosome.</text>
</comment>
<comment type="subunit">
    <text evidence="1">Part of the 50S ribosomal subunit. Forms a bridge to the 30S subunit in the 70S ribosome.</text>
</comment>
<comment type="similarity">
    <text evidence="1">Belongs to the universal ribosomal protein uL2 family.</text>
</comment>
<dbReference type="EMBL" id="CP000866">
    <property type="protein sequence ID" value="ABX12002.1"/>
    <property type="molecule type" value="Genomic_DNA"/>
</dbReference>
<dbReference type="RefSeq" id="WP_012214489.1">
    <property type="nucleotide sequence ID" value="NC_010085.1"/>
</dbReference>
<dbReference type="SMR" id="A9A141"/>
<dbReference type="FunCoup" id="A9A141">
    <property type="interactions" value="167"/>
</dbReference>
<dbReference type="STRING" id="436308.Nmar_0102"/>
<dbReference type="EnsemblBacteria" id="ABX12002">
    <property type="protein sequence ID" value="ABX12002"/>
    <property type="gene ID" value="Nmar_0102"/>
</dbReference>
<dbReference type="GeneID" id="5773575"/>
<dbReference type="KEGG" id="nmr:Nmar_0102"/>
<dbReference type="eggNOG" id="arCOG04067">
    <property type="taxonomic scope" value="Archaea"/>
</dbReference>
<dbReference type="HOGENOM" id="CLU_036235_0_1_2"/>
<dbReference type="InParanoid" id="A9A141"/>
<dbReference type="OrthoDB" id="5987at2157"/>
<dbReference type="PhylomeDB" id="A9A141"/>
<dbReference type="Proteomes" id="UP000000792">
    <property type="component" value="Chromosome"/>
</dbReference>
<dbReference type="GO" id="GO:0022625">
    <property type="term" value="C:cytosolic large ribosomal subunit"/>
    <property type="evidence" value="ECO:0000318"/>
    <property type="project" value="GO_Central"/>
</dbReference>
<dbReference type="GO" id="GO:0003723">
    <property type="term" value="F:RNA binding"/>
    <property type="evidence" value="ECO:0000318"/>
    <property type="project" value="GO_Central"/>
</dbReference>
<dbReference type="GO" id="GO:0019843">
    <property type="term" value="F:rRNA binding"/>
    <property type="evidence" value="ECO:0007669"/>
    <property type="project" value="UniProtKB-UniRule"/>
</dbReference>
<dbReference type="GO" id="GO:0003735">
    <property type="term" value="F:structural constituent of ribosome"/>
    <property type="evidence" value="ECO:0000318"/>
    <property type="project" value="GO_Central"/>
</dbReference>
<dbReference type="GO" id="GO:0002181">
    <property type="term" value="P:cytoplasmic translation"/>
    <property type="evidence" value="ECO:0000318"/>
    <property type="project" value="GO_Central"/>
</dbReference>
<dbReference type="FunFam" id="4.10.950.10:FF:000002">
    <property type="entry name" value="60S ribosomal protein L2"/>
    <property type="match status" value="1"/>
</dbReference>
<dbReference type="Gene3D" id="2.30.30.30">
    <property type="match status" value="1"/>
</dbReference>
<dbReference type="Gene3D" id="2.40.50.140">
    <property type="entry name" value="Nucleic acid-binding proteins"/>
    <property type="match status" value="1"/>
</dbReference>
<dbReference type="Gene3D" id="4.10.950.10">
    <property type="entry name" value="Ribosomal protein L2, domain 3"/>
    <property type="match status" value="1"/>
</dbReference>
<dbReference type="HAMAP" id="MF_01320_A">
    <property type="entry name" value="Ribosomal_uL2_A"/>
    <property type="match status" value="1"/>
</dbReference>
<dbReference type="InterPro" id="IPR012340">
    <property type="entry name" value="NA-bd_OB-fold"/>
</dbReference>
<dbReference type="InterPro" id="IPR014722">
    <property type="entry name" value="Rib_uL2_dom2"/>
</dbReference>
<dbReference type="InterPro" id="IPR002171">
    <property type="entry name" value="Ribosomal_uL2"/>
</dbReference>
<dbReference type="InterPro" id="IPR023672">
    <property type="entry name" value="Ribosomal_uL2_arc_euk"/>
</dbReference>
<dbReference type="InterPro" id="IPR022669">
    <property type="entry name" value="Ribosomal_uL2_C"/>
</dbReference>
<dbReference type="InterPro" id="IPR014726">
    <property type="entry name" value="Ribosomal_uL2_dom3"/>
</dbReference>
<dbReference type="InterPro" id="IPR022666">
    <property type="entry name" value="Ribosomal_uL2_RNA-bd_dom"/>
</dbReference>
<dbReference type="InterPro" id="IPR008991">
    <property type="entry name" value="Translation_prot_SH3-like_sf"/>
</dbReference>
<dbReference type="NCBIfam" id="NF007180">
    <property type="entry name" value="PRK09612.1"/>
    <property type="match status" value="1"/>
</dbReference>
<dbReference type="PANTHER" id="PTHR13691:SF16">
    <property type="entry name" value="LARGE RIBOSOMAL SUBUNIT PROTEIN UL2"/>
    <property type="match status" value="1"/>
</dbReference>
<dbReference type="PANTHER" id="PTHR13691">
    <property type="entry name" value="RIBOSOMAL PROTEIN L2"/>
    <property type="match status" value="1"/>
</dbReference>
<dbReference type="Pfam" id="PF00181">
    <property type="entry name" value="Ribosomal_L2"/>
    <property type="match status" value="1"/>
</dbReference>
<dbReference type="Pfam" id="PF03947">
    <property type="entry name" value="Ribosomal_L2_C"/>
    <property type="match status" value="1"/>
</dbReference>
<dbReference type="PIRSF" id="PIRSF002158">
    <property type="entry name" value="Ribosomal_L2"/>
    <property type="match status" value="1"/>
</dbReference>
<dbReference type="SMART" id="SM01383">
    <property type="entry name" value="Ribosomal_L2"/>
    <property type="match status" value="1"/>
</dbReference>
<dbReference type="SMART" id="SM01382">
    <property type="entry name" value="Ribosomal_L2_C"/>
    <property type="match status" value="1"/>
</dbReference>
<dbReference type="SUPFAM" id="SSF50249">
    <property type="entry name" value="Nucleic acid-binding proteins"/>
    <property type="match status" value="1"/>
</dbReference>
<dbReference type="SUPFAM" id="SSF50104">
    <property type="entry name" value="Translation proteins SH3-like domain"/>
    <property type="match status" value="1"/>
</dbReference>
<organism>
    <name type="scientific">Nitrosopumilus maritimus (strain SCM1)</name>
    <dbReference type="NCBI Taxonomy" id="436308"/>
    <lineage>
        <taxon>Archaea</taxon>
        <taxon>Nitrososphaerota</taxon>
        <taxon>Nitrososphaeria</taxon>
        <taxon>Nitrosopumilales</taxon>
        <taxon>Nitrosopumilaceae</taxon>
        <taxon>Nitrosopumilus</taxon>
    </lineage>
</organism>
<keyword id="KW-1185">Reference proteome</keyword>
<keyword id="KW-0687">Ribonucleoprotein</keyword>
<keyword id="KW-0689">Ribosomal protein</keyword>
<keyword id="KW-0694">RNA-binding</keyword>
<keyword id="KW-0699">rRNA-binding</keyword>
<reference key="1">
    <citation type="journal article" date="2010" name="Proc. Natl. Acad. Sci. U.S.A.">
        <title>Nitrosopumilus maritimus genome reveals unique mechanisms for nitrification and autotrophy in globally distributed marine crenarchaea.</title>
        <authorList>
            <person name="Walker C.B."/>
            <person name="de la Torre J.R."/>
            <person name="Klotz M.G."/>
            <person name="Urakawa H."/>
            <person name="Pinel N."/>
            <person name="Arp D.J."/>
            <person name="Brochier-Armanet C."/>
            <person name="Chain P.S."/>
            <person name="Chan P.P."/>
            <person name="Gollabgir A."/>
            <person name="Hemp J."/>
            <person name="Hugler M."/>
            <person name="Karr E.A."/>
            <person name="Konneke M."/>
            <person name="Shin M."/>
            <person name="Lawton T.J."/>
            <person name="Lowe T."/>
            <person name="Martens-Habbena W."/>
            <person name="Sayavedra-Soto L.A."/>
            <person name="Lang D."/>
            <person name="Sievert S.M."/>
            <person name="Rosenzweig A.C."/>
            <person name="Manning G."/>
            <person name="Stahl D.A."/>
        </authorList>
    </citation>
    <scope>NUCLEOTIDE SEQUENCE [LARGE SCALE GENOMIC DNA]</scope>
    <source>
        <strain>SCM1</strain>
    </source>
</reference>
<proteinExistence type="inferred from homology"/>
<feature type="chain" id="PRO_1000141587" description="Large ribosomal subunit protein uL2">
    <location>
        <begin position="1"/>
        <end position="244"/>
    </location>
</feature>
<feature type="region of interest" description="Disordered" evidence="2">
    <location>
        <begin position="1"/>
        <end position="30"/>
    </location>
</feature>
<feature type="region of interest" description="Disordered" evidence="2">
    <location>
        <begin position="203"/>
        <end position="244"/>
    </location>
</feature>
<feature type="compositionally biased region" description="Basic residues" evidence="2">
    <location>
        <begin position="1"/>
        <end position="12"/>
    </location>
</feature>
<feature type="compositionally biased region" description="Basic residues" evidence="2">
    <location>
        <begin position="234"/>
        <end position="244"/>
    </location>
</feature>
<accession>A9A141</accession>
<evidence type="ECO:0000255" key="1">
    <source>
        <dbReference type="HAMAP-Rule" id="MF_01320"/>
    </source>
</evidence>
<evidence type="ECO:0000256" key="2">
    <source>
        <dbReference type="SAM" id="MobiDB-lite"/>
    </source>
</evidence>
<evidence type="ECO:0000305" key="3"/>
<protein>
    <recommendedName>
        <fullName evidence="1">Large ribosomal subunit protein uL2</fullName>
    </recommendedName>
    <alternativeName>
        <fullName evidence="3">50S ribosomal protein L2</fullName>
    </alternativeName>
</protein>
<gene>
    <name evidence="1" type="primary">rpl2</name>
    <name type="ordered locus">Nmar_0102</name>
</gene>